<name>CDSA_BACSU</name>
<organism>
    <name type="scientific">Bacillus subtilis (strain 168)</name>
    <dbReference type="NCBI Taxonomy" id="224308"/>
    <lineage>
        <taxon>Bacteria</taxon>
        <taxon>Bacillati</taxon>
        <taxon>Bacillota</taxon>
        <taxon>Bacilli</taxon>
        <taxon>Bacillales</taxon>
        <taxon>Bacillaceae</taxon>
        <taxon>Bacillus</taxon>
    </lineage>
</organism>
<accession>O31752</accession>
<gene>
    <name type="primary">cdsA</name>
    <name type="ordered locus">BSU16540</name>
</gene>
<sequence length="269" mass="30211">MVDMKQRILTGVLAAIVFLFLVIVGKLPFTILIYAMGSVALFELLRMKKLKLVSLPGLIGLLLLWMFLLPSQYSFFEADGISKMEIALFAVLLLLTYTVLVKNTFTFDEVGFITLAAIYIGMCFHYFIEIRNLDQYGLTYIFYACVVIWSTDSGAYFVGKSLGKRKLWPEISPNKTVEGFAGGIVIALVLATIFQLVAQLPIPYIYLLLITLFLSVFGQLGDLVESALKRHYDVKDSGNILPGHGGILDRFDSFLFVMPFLYFLLALFS</sequence>
<keyword id="KW-1003">Cell membrane</keyword>
<keyword id="KW-0444">Lipid biosynthesis</keyword>
<keyword id="KW-0443">Lipid metabolism</keyword>
<keyword id="KW-0472">Membrane</keyword>
<keyword id="KW-0548">Nucleotidyltransferase</keyword>
<keyword id="KW-0594">Phospholipid biosynthesis</keyword>
<keyword id="KW-1208">Phospholipid metabolism</keyword>
<keyword id="KW-1185">Reference proteome</keyword>
<keyword id="KW-0808">Transferase</keyword>
<keyword id="KW-0812">Transmembrane</keyword>
<keyword id="KW-1133">Transmembrane helix</keyword>
<feature type="chain" id="PRO_0000090726" description="Phosphatidate cytidylyltransferase">
    <location>
        <begin position="1"/>
        <end position="269"/>
    </location>
</feature>
<feature type="transmembrane region" description="Helical" evidence="1">
    <location>
        <begin position="13"/>
        <end position="33"/>
    </location>
</feature>
<feature type="transmembrane region" description="Helical" evidence="1">
    <location>
        <begin position="50"/>
        <end position="70"/>
    </location>
</feature>
<feature type="transmembrane region" description="Helical" evidence="1">
    <location>
        <begin position="81"/>
        <end position="101"/>
    </location>
</feature>
<feature type="transmembrane region" description="Helical" evidence="1">
    <location>
        <begin position="110"/>
        <end position="130"/>
    </location>
</feature>
<feature type="transmembrane region" description="Helical" evidence="1">
    <location>
        <begin position="138"/>
        <end position="158"/>
    </location>
</feature>
<feature type="transmembrane region" description="Helical" evidence="1">
    <location>
        <begin position="180"/>
        <end position="200"/>
    </location>
</feature>
<feature type="transmembrane region" description="Helical" evidence="1">
    <location>
        <begin position="201"/>
        <end position="221"/>
    </location>
</feature>
<feature type="transmembrane region" description="Helical" evidence="1">
    <location>
        <begin position="247"/>
        <end position="267"/>
    </location>
</feature>
<reference key="1">
    <citation type="journal article" date="1997" name="Nature">
        <title>The complete genome sequence of the Gram-positive bacterium Bacillus subtilis.</title>
        <authorList>
            <person name="Kunst F."/>
            <person name="Ogasawara N."/>
            <person name="Moszer I."/>
            <person name="Albertini A.M."/>
            <person name="Alloni G."/>
            <person name="Azevedo V."/>
            <person name="Bertero M.G."/>
            <person name="Bessieres P."/>
            <person name="Bolotin A."/>
            <person name="Borchert S."/>
            <person name="Borriss R."/>
            <person name="Boursier L."/>
            <person name="Brans A."/>
            <person name="Braun M."/>
            <person name="Brignell S.C."/>
            <person name="Bron S."/>
            <person name="Brouillet S."/>
            <person name="Bruschi C.V."/>
            <person name="Caldwell B."/>
            <person name="Capuano V."/>
            <person name="Carter N.M."/>
            <person name="Choi S.-K."/>
            <person name="Codani J.-J."/>
            <person name="Connerton I.F."/>
            <person name="Cummings N.J."/>
            <person name="Daniel R.A."/>
            <person name="Denizot F."/>
            <person name="Devine K.M."/>
            <person name="Duesterhoeft A."/>
            <person name="Ehrlich S.D."/>
            <person name="Emmerson P.T."/>
            <person name="Entian K.-D."/>
            <person name="Errington J."/>
            <person name="Fabret C."/>
            <person name="Ferrari E."/>
            <person name="Foulger D."/>
            <person name="Fritz C."/>
            <person name="Fujita M."/>
            <person name="Fujita Y."/>
            <person name="Fuma S."/>
            <person name="Galizzi A."/>
            <person name="Galleron N."/>
            <person name="Ghim S.-Y."/>
            <person name="Glaser P."/>
            <person name="Goffeau A."/>
            <person name="Golightly E.J."/>
            <person name="Grandi G."/>
            <person name="Guiseppi G."/>
            <person name="Guy B.J."/>
            <person name="Haga K."/>
            <person name="Haiech J."/>
            <person name="Harwood C.R."/>
            <person name="Henaut A."/>
            <person name="Hilbert H."/>
            <person name="Holsappel S."/>
            <person name="Hosono S."/>
            <person name="Hullo M.-F."/>
            <person name="Itaya M."/>
            <person name="Jones L.-M."/>
            <person name="Joris B."/>
            <person name="Karamata D."/>
            <person name="Kasahara Y."/>
            <person name="Klaerr-Blanchard M."/>
            <person name="Klein C."/>
            <person name="Kobayashi Y."/>
            <person name="Koetter P."/>
            <person name="Koningstein G."/>
            <person name="Krogh S."/>
            <person name="Kumano M."/>
            <person name="Kurita K."/>
            <person name="Lapidus A."/>
            <person name="Lardinois S."/>
            <person name="Lauber J."/>
            <person name="Lazarevic V."/>
            <person name="Lee S.-M."/>
            <person name="Levine A."/>
            <person name="Liu H."/>
            <person name="Masuda S."/>
            <person name="Mauel C."/>
            <person name="Medigue C."/>
            <person name="Medina N."/>
            <person name="Mellado R.P."/>
            <person name="Mizuno M."/>
            <person name="Moestl D."/>
            <person name="Nakai S."/>
            <person name="Noback M."/>
            <person name="Noone D."/>
            <person name="O'Reilly M."/>
            <person name="Ogawa K."/>
            <person name="Ogiwara A."/>
            <person name="Oudega B."/>
            <person name="Park S.-H."/>
            <person name="Parro V."/>
            <person name="Pohl T.M."/>
            <person name="Portetelle D."/>
            <person name="Porwollik S."/>
            <person name="Prescott A.M."/>
            <person name="Presecan E."/>
            <person name="Pujic P."/>
            <person name="Purnelle B."/>
            <person name="Rapoport G."/>
            <person name="Rey M."/>
            <person name="Reynolds S."/>
            <person name="Rieger M."/>
            <person name="Rivolta C."/>
            <person name="Rocha E."/>
            <person name="Roche B."/>
            <person name="Rose M."/>
            <person name="Sadaie Y."/>
            <person name="Sato T."/>
            <person name="Scanlan E."/>
            <person name="Schleich S."/>
            <person name="Schroeter R."/>
            <person name="Scoffone F."/>
            <person name="Sekiguchi J."/>
            <person name="Sekowska A."/>
            <person name="Seror S.J."/>
            <person name="Serror P."/>
            <person name="Shin B.-S."/>
            <person name="Soldo B."/>
            <person name="Sorokin A."/>
            <person name="Tacconi E."/>
            <person name="Takagi T."/>
            <person name="Takahashi H."/>
            <person name="Takemaru K."/>
            <person name="Takeuchi M."/>
            <person name="Tamakoshi A."/>
            <person name="Tanaka T."/>
            <person name="Terpstra P."/>
            <person name="Tognoni A."/>
            <person name="Tosato V."/>
            <person name="Uchiyama S."/>
            <person name="Vandenbol M."/>
            <person name="Vannier F."/>
            <person name="Vassarotti A."/>
            <person name="Viari A."/>
            <person name="Wambutt R."/>
            <person name="Wedler E."/>
            <person name="Wedler H."/>
            <person name="Weitzenegger T."/>
            <person name="Winters P."/>
            <person name="Wipat A."/>
            <person name="Yamamoto H."/>
            <person name="Yamane K."/>
            <person name="Yasumoto K."/>
            <person name="Yata K."/>
            <person name="Yoshida K."/>
            <person name="Yoshikawa H.-F."/>
            <person name="Zumstein E."/>
            <person name="Yoshikawa H."/>
            <person name="Danchin A."/>
        </authorList>
    </citation>
    <scope>NUCLEOTIDE SEQUENCE [LARGE SCALE GENOMIC DNA]</scope>
    <source>
        <strain>168</strain>
    </source>
</reference>
<reference key="2">
    <citation type="journal article" date="2005" name="J. Bacteriol.">
        <title>Phosphatidylethanolamine domains and localization of phospholipid synthases in Bacillus subtilis membranes.</title>
        <authorList>
            <person name="Nishibori A."/>
            <person name="Kusaka J."/>
            <person name="Hara H."/>
            <person name="Umeda M."/>
            <person name="Matsumoto K."/>
        </authorList>
    </citation>
    <scope>SUBCELLULAR LOCATION</scope>
</reference>
<proteinExistence type="inferred from homology"/>
<evidence type="ECO:0000255" key="1"/>
<evidence type="ECO:0000269" key="2">
    <source>
    </source>
</evidence>
<evidence type="ECO:0000305" key="3"/>
<protein>
    <recommendedName>
        <fullName>Phosphatidate cytidylyltransferase</fullName>
        <ecNumber>2.7.7.41</ecNumber>
    </recommendedName>
    <alternativeName>
        <fullName>CDP-DAG synthase</fullName>
    </alternativeName>
    <alternativeName>
        <fullName>CDP-DG synthase</fullName>
    </alternativeName>
    <alternativeName>
        <fullName>CDP-diacylglycerol synthase</fullName>
        <shortName>CDS</shortName>
    </alternativeName>
    <alternativeName>
        <fullName>CDP-diglyceride pyrophosphorylase</fullName>
    </alternativeName>
    <alternativeName>
        <fullName>CDP-diglyceride synthase</fullName>
    </alternativeName>
    <alternativeName>
        <fullName>CTP:phosphatidate cytidylyltransferase</fullName>
    </alternativeName>
</protein>
<comment type="catalytic activity">
    <reaction>
        <text>a 1,2-diacyl-sn-glycero-3-phosphate + CTP + H(+) = a CDP-1,2-diacyl-sn-glycerol + diphosphate</text>
        <dbReference type="Rhea" id="RHEA:16229"/>
        <dbReference type="ChEBI" id="CHEBI:15378"/>
        <dbReference type="ChEBI" id="CHEBI:33019"/>
        <dbReference type="ChEBI" id="CHEBI:37563"/>
        <dbReference type="ChEBI" id="CHEBI:58332"/>
        <dbReference type="ChEBI" id="CHEBI:58608"/>
        <dbReference type="EC" id="2.7.7.41"/>
    </reaction>
</comment>
<comment type="pathway">
    <text>Phospholipid metabolism; CDP-diacylglycerol biosynthesis; CDP-diacylglycerol from sn-glycerol 3-phosphate: step 3/3.</text>
</comment>
<comment type="subcellular location">
    <subcellularLocation>
        <location evidence="3">Cell membrane</location>
        <topology evidence="3">Multi-pass membrane protein</topology>
    </subcellularLocation>
    <text evidence="2">Localized in the septal membrane.</text>
</comment>
<comment type="similarity">
    <text evidence="3">Belongs to the CDS family.</text>
</comment>
<dbReference type="EC" id="2.7.7.41"/>
<dbReference type="EMBL" id="AL009126">
    <property type="protein sequence ID" value="CAB13527.1"/>
    <property type="molecule type" value="Genomic_DNA"/>
</dbReference>
<dbReference type="PIR" id="G69597">
    <property type="entry name" value="G69597"/>
</dbReference>
<dbReference type="RefSeq" id="NP_389536.1">
    <property type="nucleotide sequence ID" value="NC_000964.3"/>
</dbReference>
<dbReference type="RefSeq" id="WP_003231924.1">
    <property type="nucleotide sequence ID" value="NZ_OZ025638.1"/>
</dbReference>
<dbReference type="SMR" id="O31752"/>
<dbReference type="FunCoup" id="O31752">
    <property type="interactions" value="637"/>
</dbReference>
<dbReference type="STRING" id="224308.BSU16540"/>
<dbReference type="PaxDb" id="224308-BSU16540"/>
<dbReference type="EnsemblBacteria" id="CAB13527">
    <property type="protein sequence ID" value="CAB13527"/>
    <property type="gene ID" value="BSU_16540"/>
</dbReference>
<dbReference type="GeneID" id="939607"/>
<dbReference type="KEGG" id="bsu:BSU16540"/>
<dbReference type="PATRIC" id="fig|224308.43.peg.1749"/>
<dbReference type="eggNOG" id="COG4589">
    <property type="taxonomic scope" value="Bacteria"/>
</dbReference>
<dbReference type="InParanoid" id="O31752"/>
<dbReference type="OrthoDB" id="9799199at2"/>
<dbReference type="PhylomeDB" id="O31752"/>
<dbReference type="BioCyc" id="BSUB:BSU16540-MONOMER"/>
<dbReference type="SABIO-RK" id="O31752"/>
<dbReference type="UniPathway" id="UPA00557">
    <property type="reaction ID" value="UER00614"/>
</dbReference>
<dbReference type="Proteomes" id="UP000001570">
    <property type="component" value="Chromosome"/>
</dbReference>
<dbReference type="GO" id="GO:0005886">
    <property type="term" value="C:plasma membrane"/>
    <property type="evidence" value="ECO:0000318"/>
    <property type="project" value="GO_Central"/>
</dbReference>
<dbReference type="GO" id="GO:0004605">
    <property type="term" value="F:phosphatidate cytidylyltransferase activity"/>
    <property type="evidence" value="ECO:0000318"/>
    <property type="project" value="GO_Central"/>
</dbReference>
<dbReference type="GO" id="GO:0016024">
    <property type="term" value="P:CDP-diacylglycerol biosynthetic process"/>
    <property type="evidence" value="ECO:0000318"/>
    <property type="project" value="GO_Central"/>
</dbReference>
<dbReference type="InterPro" id="IPR000374">
    <property type="entry name" value="PC_trans"/>
</dbReference>
<dbReference type="PANTHER" id="PTHR46382">
    <property type="entry name" value="PHOSPHATIDATE CYTIDYLYLTRANSFERASE"/>
    <property type="match status" value="1"/>
</dbReference>
<dbReference type="PANTHER" id="PTHR46382:SF1">
    <property type="entry name" value="PHOSPHATIDATE CYTIDYLYLTRANSFERASE"/>
    <property type="match status" value="1"/>
</dbReference>
<dbReference type="Pfam" id="PF01148">
    <property type="entry name" value="CTP_transf_1"/>
    <property type="match status" value="1"/>
</dbReference>
<dbReference type="PROSITE" id="PS01315">
    <property type="entry name" value="CDS"/>
    <property type="match status" value="1"/>
</dbReference>